<accession>Q5E2Z2</accession>
<comment type="similarity">
    <text evidence="1">Belongs to the UPF0246 family.</text>
</comment>
<protein>
    <recommendedName>
        <fullName evidence="1">UPF0246 protein VF_2109</fullName>
    </recommendedName>
</protein>
<feature type="chain" id="PRO_0000262075" description="UPF0246 protein VF_2109">
    <location>
        <begin position="1"/>
        <end position="259"/>
    </location>
</feature>
<evidence type="ECO:0000255" key="1">
    <source>
        <dbReference type="HAMAP-Rule" id="MF_00652"/>
    </source>
</evidence>
<sequence>MLIVVSPAKTLDYETPLPTSAFTQPDFISDSAELIKACRTLTPVDIAKLMKVSDKIASLNAVRFEEWSTTFTQENARPALFAFKGDVYTGLDANSLSESEIEYAQTNLRMLSGLYGLLKPLDLMQPYRLEMGTKLENGRGSNLYQFWGSLITNKLNQELEAQGSETLVNLASNEYFKSVKPKELKADIVTPVFKDCKNGQYKIISFYAKKARGLMARFIIQNKISNVEELKSFDSDGYYFVEAESTATTLVFKREEQNK</sequence>
<name>Y2109_ALIF1</name>
<reference key="1">
    <citation type="journal article" date="2005" name="Proc. Natl. Acad. Sci. U.S.A.">
        <title>Complete genome sequence of Vibrio fischeri: a symbiotic bacterium with pathogenic congeners.</title>
        <authorList>
            <person name="Ruby E.G."/>
            <person name="Urbanowski M."/>
            <person name="Campbell J."/>
            <person name="Dunn A."/>
            <person name="Faini M."/>
            <person name="Gunsalus R."/>
            <person name="Lostroh P."/>
            <person name="Lupp C."/>
            <person name="McCann J."/>
            <person name="Millikan D."/>
            <person name="Schaefer A."/>
            <person name="Stabb E."/>
            <person name="Stevens A."/>
            <person name="Visick K."/>
            <person name="Whistler C."/>
            <person name="Greenberg E.P."/>
        </authorList>
    </citation>
    <scope>NUCLEOTIDE SEQUENCE [LARGE SCALE GENOMIC DNA]</scope>
    <source>
        <strain>ATCC 700601 / ES114</strain>
    </source>
</reference>
<proteinExistence type="inferred from homology"/>
<organism>
    <name type="scientific">Aliivibrio fischeri (strain ATCC 700601 / ES114)</name>
    <name type="common">Vibrio fischeri</name>
    <dbReference type="NCBI Taxonomy" id="312309"/>
    <lineage>
        <taxon>Bacteria</taxon>
        <taxon>Pseudomonadati</taxon>
        <taxon>Pseudomonadota</taxon>
        <taxon>Gammaproteobacteria</taxon>
        <taxon>Vibrionales</taxon>
        <taxon>Vibrionaceae</taxon>
        <taxon>Aliivibrio</taxon>
    </lineage>
</organism>
<dbReference type="EMBL" id="CP000020">
    <property type="protein sequence ID" value="AAW86604.1"/>
    <property type="molecule type" value="Genomic_DNA"/>
</dbReference>
<dbReference type="RefSeq" id="YP_205492.1">
    <property type="nucleotide sequence ID" value="NC_006840.2"/>
</dbReference>
<dbReference type="SMR" id="Q5E2Z2"/>
<dbReference type="STRING" id="312309.VF_2109"/>
<dbReference type="EnsemblBacteria" id="AAW86604">
    <property type="protein sequence ID" value="AAW86604"/>
    <property type="gene ID" value="VF_2109"/>
</dbReference>
<dbReference type="GeneID" id="54164815"/>
<dbReference type="KEGG" id="vfi:VF_2109"/>
<dbReference type="PATRIC" id="fig|312309.11.peg.2151"/>
<dbReference type="eggNOG" id="COG3022">
    <property type="taxonomic scope" value="Bacteria"/>
</dbReference>
<dbReference type="HOGENOM" id="CLU_061989_0_0_6"/>
<dbReference type="OrthoDB" id="9777133at2"/>
<dbReference type="Proteomes" id="UP000000537">
    <property type="component" value="Chromosome I"/>
</dbReference>
<dbReference type="GO" id="GO:0005829">
    <property type="term" value="C:cytosol"/>
    <property type="evidence" value="ECO:0007669"/>
    <property type="project" value="TreeGrafter"/>
</dbReference>
<dbReference type="GO" id="GO:0033194">
    <property type="term" value="P:response to hydroperoxide"/>
    <property type="evidence" value="ECO:0007669"/>
    <property type="project" value="TreeGrafter"/>
</dbReference>
<dbReference type="HAMAP" id="MF_00652">
    <property type="entry name" value="UPF0246"/>
    <property type="match status" value="1"/>
</dbReference>
<dbReference type="InterPro" id="IPR005583">
    <property type="entry name" value="YaaA"/>
</dbReference>
<dbReference type="NCBIfam" id="NF002541">
    <property type="entry name" value="PRK02101.1-1"/>
    <property type="match status" value="1"/>
</dbReference>
<dbReference type="NCBIfam" id="NF002542">
    <property type="entry name" value="PRK02101.1-3"/>
    <property type="match status" value="1"/>
</dbReference>
<dbReference type="PANTHER" id="PTHR30283:SF4">
    <property type="entry name" value="PEROXIDE STRESS RESISTANCE PROTEIN YAAA"/>
    <property type="match status" value="1"/>
</dbReference>
<dbReference type="PANTHER" id="PTHR30283">
    <property type="entry name" value="PEROXIDE STRESS RESPONSE PROTEIN YAAA"/>
    <property type="match status" value="1"/>
</dbReference>
<dbReference type="Pfam" id="PF03883">
    <property type="entry name" value="H2O2_YaaD"/>
    <property type="match status" value="1"/>
</dbReference>
<gene>
    <name type="ordered locus">VF_2109</name>
</gene>
<keyword id="KW-1185">Reference proteome</keyword>